<protein>
    <recommendedName>
        <fullName evidence="1">Lipoyl synthase</fullName>
        <ecNumber evidence="1">2.8.1.8</ecNumber>
    </recommendedName>
    <alternativeName>
        <fullName evidence="1">Lip-syn</fullName>
        <shortName evidence="1">LS</shortName>
    </alternativeName>
    <alternativeName>
        <fullName evidence="1">Lipoate synthase</fullName>
    </alternativeName>
    <alternativeName>
        <fullName evidence="1">Lipoic acid synthase</fullName>
    </alternativeName>
    <alternativeName>
        <fullName evidence="1">Sulfur insertion protein LipA</fullName>
    </alternativeName>
</protein>
<sequence>MATKNEEILRKPDWLKIKLNTNENYTGLKKMMREKNLNTVCEEAKCPNIHECWGARRTATFMILGAVCTRACRFCAVKTGLPNELDLNEPERVAESVELMNLKHVVITAVARDDLRDAGSNVYAETVRKVRERNPFTTIEILPSDMGGDYDALETLMASRPDILNHNIETVRRLTPRVRARATYDRTLEFLRRSKELQPDIPTKSSIMVGLGETIEEIYETMDDLRANDVDILTIGQYLQPSRKHLKVQKYYTPLEFGKLRKVAMDKGFKHCQAGPLVRSSYHADEQVNEAAKEKQRQGEAQLNS</sequence>
<reference key="1">
    <citation type="journal article" date="2002" name="Lancet">
        <title>Genome and virulence determinants of high virulence community-acquired MRSA.</title>
        <authorList>
            <person name="Baba T."/>
            <person name="Takeuchi F."/>
            <person name="Kuroda M."/>
            <person name="Yuzawa H."/>
            <person name="Aoki K."/>
            <person name="Oguchi A."/>
            <person name="Nagai Y."/>
            <person name="Iwama N."/>
            <person name="Asano K."/>
            <person name="Naimi T."/>
            <person name="Kuroda H."/>
            <person name="Cui L."/>
            <person name="Yamamoto K."/>
            <person name="Hiramatsu K."/>
        </authorList>
    </citation>
    <scope>NUCLEOTIDE SEQUENCE [LARGE SCALE GENOMIC DNA]</scope>
    <source>
        <strain>MW2</strain>
    </source>
</reference>
<gene>
    <name evidence="1" type="primary">lipA</name>
    <name type="ordered locus">MW0807</name>
</gene>
<proteinExistence type="inferred from homology"/>
<evidence type="ECO:0000255" key="1">
    <source>
        <dbReference type="HAMAP-Rule" id="MF_00206"/>
    </source>
</evidence>
<evidence type="ECO:0000255" key="2">
    <source>
        <dbReference type="PROSITE-ProRule" id="PRU01266"/>
    </source>
</evidence>
<evidence type="ECO:0000256" key="3">
    <source>
        <dbReference type="SAM" id="MobiDB-lite"/>
    </source>
</evidence>
<comment type="function">
    <text evidence="1">Catalyzes the radical-mediated insertion of two sulfur atoms into the C-6 and C-8 positions of the octanoyl moiety bound to the lipoyl domains of lipoate-dependent enzymes, thereby converting the octanoylated domains into lipoylated derivatives.</text>
</comment>
<comment type="catalytic activity">
    <reaction evidence="1">
        <text>[[Fe-S] cluster scaffold protein carrying a second [4Fe-4S](2+) cluster] + N(6)-octanoyl-L-lysyl-[protein] + 2 oxidized [2Fe-2S]-[ferredoxin] + 2 S-adenosyl-L-methionine + 4 H(+) = [[Fe-S] cluster scaffold protein] + N(6)-[(R)-dihydrolipoyl]-L-lysyl-[protein] + 4 Fe(3+) + 2 hydrogen sulfide + 2 5'-deoxyadenosine + 2 L-methionine + 2 reduced [2Fe-2S]-[ferredoxin]</text>
        <dbReference type="Rhea" id="RHEA:16585"/>
        <dbReference type="Rhea" id="RHEA-COMP:9928"/>
        <dbReference type="Rhea" id="RHEA-COMP:10000"/>
        <dbReference type="Rhea" id="RHEA-COMP:10001"/>
        <dbReference type="Rhea" id="RHEA-COMP:10475"/>
        <dbReference type="Rhea" id="RHEA-COMP:14568"/>
        <dbReference type="Rhea" id="RHEA-COMP:14569"/>
        <dbReference type="ChEBI" id="CHEBI:15378"/>
        <dbReference type="ChEBI" id="CHEBI:17319"/>
        <dbReference type="ChEBI" id="CHEBI:29034"/>
        <dbReference type="ChEBI" id="CHEBI:29919"/>
        <dbReference type="ChEBI" id="CHEBI:33722"/>
        <dbReference type="ChEBI" id="CHEBI:33737"/>
        <dbReference type="ChEBI" id="CHEBI:33738"/>
        <dbReference type="ChEBI" id="CHEBI:57844"/>
        <dbReference type="ChEBI" id="CHEBI:59789"/>
        <dbReference type="ChEBI" id="CHEBI:78809"/>
        <dbReference type="ChEBI" id="CHEBI:83100"/>
        <dbReference type="EC" id="2.8.1.8"/>
    </reaction>
</comment>
<comment type="cofactor">
    <cofactor evidence="1">
        <name>[4Fe-4S] cluster</name>
        <dbReference type="ChEBI" id="CHEBI:49883"/>
    </cofactor>
    <text evidence="1">Binds 2 [4Fe-4S] clusters per subunit. One cluster is coordinated with 3 cysteines and an exchangeable S-adenosyl-L-methionine.</text>
</comment>
<comment type="pathway">
    <text evidence="1">Protein modification; protein lipoylation via endogenous pathway; protein N(6)-(lipoyl)lysine from octanoyl-[acyl-carrier-protein].</text>
</comment>
<comment type="subcellular location">
    <subcellularLocation>
        <location evidence="1">Cytoplasm</location>
    </subcellularLocation>
</comment>
<comment type="similarity">
    <text evidence="1">Belongs to the radical SAM superfamily. Lipoyl synthase family.</text>
</comment>
<dbReference type="EC" id="2.8.1.8" evidence="1"/>
<dbReference type="EMBL" id="BA000033">
    <property type="protein sequence ID" value="BAB94672.1"/>
    <property type="molecule type" value="Genomic_DNA"/>
</dbReference>
<dbReference type="RefSeq" id="WP_000201875.1">
    <property type="nucleotide sequence ID" value="NC_003923.1"/>
</dbReference>
<dbReference type="SMR" id="P65287"/>
<dbReference type="GeneID" id="98345243"/>
<dbReference type="KEGG" id="sam:MW0807"/>
<dbReference type="HOGENOM" id="CLU_033144_2_1_9"/>
<dbReference type="GO" id="GO:0005737">
    <property type="term" value="C:cytoplasm"/>
    <property type="evidence" value="ECO:0007669"/>
    <property type="project" value="UniProtKB-SubCell"/>
</dbReference>
<dbReference type="GO" id="GO:0051539">
    <property type="term" value="F:4 iron, 4 sulfur cluster binding"/>
    <property type="evidence" value="ECO:0007669"/>
    <property type="project" value="UniProtKB-UniRule"/>
</dbReference>
<dbReference type="GO" id="GO:0016992">
    <property type="term" value="F:lipoate synthase activity"/>
    <property type="evidence" value="ECO:0007669"/>
    <property type="project" value="UniProtKB-UniRule"/>
</dbReference>
<dbReference type="GO" id="GO:0046872">
    <property type="term" value="F:metal ion binding"/>
    <property type="evidence" value="ECO:0007669"/>
    <property type="project" value="UniProtKB-KW"/>
</dbReference>
<dbReference type="CDD" id="cd01335">
    <property type="entry name" value="Radical_SAM"/>
    <property type="match status" value="1"/>
</dbReference>
<dbReference type="FunFam" id="3.20.20.70:FF:000040">
    <property type="entry name" value="Lipoyl synthase"/>
    <property type="match status" value="1"/>
</dbReference>
<dbReference type="Gene3D" id="3.20.20.70">
    <property type="entry name" value="Aldolase class I"/>
    <property type="match status" value="1"/>
</dbReference>
<dbReference type="HAMAP" id="MF_00206">
    <property type="entry name" value="Lipoyl_synth"/>
    <property type="match status" value="1"/>
</dbReference>
<dbReference type="InterPro" id="IPR013785">
    <property type="entry name" value="Aldolase_TIM"/>
</dbReference>
<dbReference type="InterPro" id="IPR006638">
    <property type="entry name" value="Elp3/MiaA/NifB-like_rSAM"/>
</dbReference>
<dbReference type="InterPro" id="IPR031691">
    <property type="entry name" value="LIAS_N"/>
</dbReference>
<dbReference type="InterPro" id="IPR003698">
    <property type="entry name" value="Lipoyl_synth"/>
</dbReference>
<dbReference type="InterPro" id="IPR007197">
    <property type="entry name" value="rSAM"/>
</dbReference>
<dbReference type="NCBIfam" id="TIGR00510">
    <property type="entry name" value="lipA"/>
    <property type="match status" value="1"/>
</dbReference>
<dbReference type="NCBIfam" id="NF004019">
    <property type="entry name" value="PRK05481.1"/>
    <property type="match status" value="1"/>
</dbReference>
<dbReference type="NCBIfam" id="NF009544">
    <property type="entry name" value="PRK12928.1"/>
    <property type="match status" value="1"/>
</dbReference>
<dbReference type="PANTHER" id="PTHR10949">
    <property type="entry name" value="LIPOYL SYNTHASE"/>
    <property type="match status" value="1"/>
</dbReference>
<dbReference type="PANTHER" id="PTHR10949:SF0">
    <property type="entry name" value="LIPOYL SYNTHASE, MITOCHONDRIAL"/>
    <property type="match status" value="1"/>
</dbReference>
<dbReference type="Pfam" id="PF16881">
    <property type="entry name" value="LIAS_N"/>
    <property type="match status" value="1"/>
</dbReference>
<dbReference type="Pfam" id="PF04055">
    <property type="entry name" value="Radical_SAM"/>
    <property type="match status" value="1"/>
</dbReference>
<dbReference type="PIRSF" id="PIRSF005963">
    <property type="entry name" value="Lipoyl_synth"/>
    <property type="match status" value="1"/>
</dbReference>
<dbReference type="SFLD" id="SFLDF00271">
    <property type="entry name" value="lipoyl_synthase"/>
    <property type="match status" value="1"/>
</dbReference>
<dbReference type="SFLD" id="SFLDS00029">
    <property type="entry name" value="Radical_SAM"/>
    <property type="match status" value="1"/>
</dbReference>
<dbReference type="SMART" id="SM00729">
    <property type="entry name" value="Elp3"/>
    <property type="match status" value="1"/>
</dbReference>
<dbReference type="SUPFAM" id="SSF102114">
    <property type="entry name" value="Radical SAM enzymes"/>
    <property type="match status" value="1"/>
</dbReference>
<dbReference type="PROSITE" id="PS51918">
    <property type="entry name" value="RADICAL_SAM"/>
    <property type="match status" value="1"/>
</dbReference>
<keyword id="KW-0004">4Fe-4S</keyword>
<keyword id="KW-0963">Cytoplasm</keyword>
<keyword id="KW-0408">Iron</keyword>
<keyword id="KW-0411">Iron-sulfur</keyword>
<keyword id="KW-0479">Metal-binding</keyword>
<keyword id="KW-0949">S-adenosyl-L-methionine</keyword>
<keyword id="KW-0808">Transferase</keyword>
<name>LIPA_STAAW</name>
<feature type="chain" id="PRO_0000102362" description="Lipoyl synthase">
    <location>
        <begin position="1"/>
        <end position="305"/>
    </location>
</feature>
<feature type="domain" description="Radical SAM core" evidence="2">
    <location>
        <begin position="54"/>
        <end position="270"/>
    </location>
</feature>
<feature type="region of interest" description="Disordered" evidence="3">
    <location>
        <begin position="283"/>
        <end position="305"/>
    </location>
</feature>
<feature type="compositionally biased region" description="Basic and acidic residues" evidence="3">
    <location>
        <begin position="283"/>
        <end position="298"/>
    </location>
</feature>
<feature type="binding site" evidence="1">
    <location>
        <position position="41"/>
    </location>
    <ligand>
        <name>[4Fe-4S] cluster</name>
        <dbReference type="ChEBI" id="CHEBI:49883"/>
        <label>1</label>
    </ligand>
</feature>
<feature type="binding site" evidence="1">
    <location>
        <position position="46"/>
    </location>
    <ligand>
        <name>[4Fe-4S] cluster</name>
        <dbReference type="ChEBI" id="CHEBI:49883"/>
        <label>1</label>
    </ligand>
</feature>
<feature type="binding site" evidence="1">
    <location>
        <position position="52"/>
    </location>
    <ligand>
        <name>[4Fe-4S] cluster</name>
        <dbReference type="ChEBI" id="CHEBI:49883"/>
        <label>1</label>
    </ligand>
</feature>
<feature type="binding site" evidence="1">
    <location>
        <position position="68"/>
    </location>
    <ligand>
        <name>[4Fe-4S] cluster</name>
        <dbReference type="ChEBI" id="CHEBI:49883"/>
        <label>2</label>
        <note>4Fe-4S-S-AdoMet</note>
    </ligand>
</feature>
<feature type="binding site" evidence="1">
    <location>
        <position position="72"/>
    </location>
    <ligand>
        <name>[4Fe-4S] cluster</name>
        <dbReference type="ChEBI" id="CHEBI:49883"/>
        <label>2</label>
        <note>4Fe-4S-S-AdoMet</note>
    </ligand>
</feature>
<feature type="binding site" evidence="1">
    <location>
        <position position="75"/>
    </location>
    <ligand>
        <name>[4Fe-4S] cluster</name>
        <dbReference type="ChEBI" id="CHEBI:49883"/>
        <label>2</label>
        <note>4Fe-4S-S-AdoMet</note>
    </ligand>
</feature>
<feature type="binding site" evidence="1">
    <location>
        <position position="281"/>
    </location>
    <ligand>
        <name>[4Fe-4S] cluster</name>
        <dbReference type="ChEBI" id="CHEBI:49883"/>
        <label>1</label>
    </ligand>
</feature>
<organism>
    <name type="scientific">Staphylococcus aureus (strain MW2)</name>
    <dbReference type="NCBI Taxonomy" id="196620"/>
    <lineage>
        <taxon>Bacteria</taxon>
        <taxon>Bacillati</taxon>
        <taxon>Bacillota</taxon>
        <taxon>Bacilli</taxon>
        <taxon>Bacillales</taxon>
        <taxon>Staphylococcaceae</taxon>
        <taxon>Staphylococcus</taxon>
    </lineage>
</organism>
<accession>P65287</accession>
<accession>Q99VF2</accession>